<sequence length="241" mass="26955">MSLLSAIDTSAASVYQPAQLLNWVYLSLQDTHQASAFDAFRPEPTAGAAPPELAFGKGRPEQLGSPLHSSYLNSFFQLQRGEALSNSVYKGASPYGSLNNIADGLSSLTEHFSDLTLTSEARKPSKRPPPNYLCHLCFNKGHYIKDCPQARPKGEGLTPYQGKKRCFGEYKCPKCKRKWMSGNSWANMGQECIKCHINVYPHKQRPLEKPDGLDVSDQSKEHPQHLCEKCKVLGYYCRRVQ</sequence>
<name>ZCH24_HUMAN</name>
<organism>
    <name type="scientific">Homo sapiens</name>
    <name type="common">Human</name>
    <dbReference type="NCBI Taxonomy" id="9606"/>
    <lineage>
        <taxon>Eukaryota</taxon>
        <taxon>Metazoa</taxon>
        <taxon>Chordata</taxon>
        <taxon>Craniata</taxon>
        <taxon>Vertebrata</taxon>
        <taxon>Euteleostomi</taxon>
        <taxon>Mammalia</taxon>
        <taxon>Eutheria</taxon>
        <taxon>Euarchontoglires</taxon>
        <taxon>Primates</taxon>
        <taxon>Haplorrhini</taxon>
        <taxon>Catarrhini</taxon>
        <taxon>Hominidae</taxon>
        <taxon>Homo</taxon>
    </lineage>
</organism>
<dbReference type="EMBL" id="AK075279">
    <property type="protein sequence ID" value="BAC11516.1"/>
    <property type="molecule type" value="mRNA"/>
</dbReference>
<dbReference type="EMBL" id="AL133481">
    <property type="status" value="NOT_ANNOTATED_CDS"/>
    <property type="molecule type" value="Genomic_DNA"/>
</dbReference>
<dbReference type="EMBL" id="BC028617">
    <property type="protein sequence ID" value="AAH28617.1"/>
    <property type="molecule type" value="mRNA"/>
</dbReference>
<dbReference type="EMBL" id="BC039249">
    <property type="protein sequence ID" value="AAH39249.1"/>
    <property type="status" value="ALT_FRAME"/>
    <property type="molecule type" value="mRNA"/>
</dbReference>
<dbReference type="EMBL" id="BC053564">
    <property type="protein sequence ID" value="AAH53564.1"/>
    <property type="molecule type" value="mRNA"/>
</dbReference>
<dbReference type="CCDS" id="CCDS7359.1"/>
<dbReference type="RefSeq" id="NP_699198.2">
    <property type="nucleotide sequence ID" value="NM_153367.4"/>
</dbReference>
<dbReference type="BioGRID" id="128561">
    <property type="interactions" value="22"/>
</dbReference>
<dbReference type="FunCoup" id="Q8N2G6">
    <property type="interactions" value="59"/>
</dbReference>
<dbReference type="STRING" id="9606.ENSP00000361411"/>
<dbReference type="GlyGen" id="Q8N2G6">
    <property type="glycosylation" value="2 sites, 1 O-linked glycan (1 site)"/>
</dbReference>
<dbReference type="iPTMnet" id="Q8N2G6"/>
<dbReference type="PhosphoSitePlus" id="Q8N2G6"/>
<dbReference type="BioMuta" id="ZCCHC24"/>
<dbReference type="DMDM" id="74759814"/>
<dbReference type="jPOST" id="Q8N2G6"/>
<dbReference type="MassIVE" id="Q8N2G6"/>
<dbReference type="PaxDb" id="9606-ENSP00000361411"/>
<dbReference type="PeptideAtlas" id="Q8N2G6"/>
<dbReference type="ProteomicsDB" id="71696"/>
<dbReference type="Pumba" id="Q8N2G6"/>
<dbReference type="Antibodypedia" id="29874">
    <property type="antibodies" value="119 antibodies from 18 providers"/>
</dbReference>
<dbReference type="DNASU" id="219654"/>
<dbReference type="Ensembl" id="ENST00000372336.4">
    <property type="protein sequence ID" value="ENSP00000361411.3"/>
    <property type="gene ID" value="ENSG00000165424.7"/>
</dbReference>
<dbReference type="GeneID" id="219654"/>
<dbReference type="KEGG" id="hsa:219654"/>
<dbReference type="MANE-Select" id="ENST00000372336.4">
    <property type="protein sequence ID" value="ENSP00000361411.3"/>
    <property type="RefSeq nucleotide sequence ID" value="NM_153367.4"/>
    <property type="RefSeq protein sequence ID" value="NP_699198.2"/>
</dbReference>
<dbReference type="UCSC" id="uc001kak.4">
    <property type="organism name" value="human"/>
</dbReference>
<dbReference type="AGR" id="HGNC:26911"/>
<dbReference type="CTD" id="219654"/>
<dbReference type="DisGeNET" id="219654"/>
<dbReference type="GeneCards" id="ZCCHC24"/>
<dbReference type="HGNC" id="HGNC:26911">
    <property type="gene designation" value="ZCCHC24"/>
</dbReference>
<dbReference type="HPA" id="ENSG00000165424">
    <property type="expression patterns" value="Tissue enhanced (brain)"/>
</dbReference>
<dbReference type="neXtProt" id="NX_Q8N2G6"/>
<dbReference type="OpenTargets" id="ENSG00000165424"/>
<dbReference type="PharmGKB" id="PA162409573"/>
<dbReference type="VEuPathDB" id="HostDB:ENSG00000165424"/>
<dbReference type="eggNOG" id="ENOG502QRVW">
    <property type="taxonomic scope" value="Eukaryota"/>
</dbReference>
<dbReference type="GeneTree" id="ENSGT00390000008264"/>
<dbReference type="HOGENOM" id="CLU_081736_0_0_1"/>
<dbReference type="InParanoid" id="Q8N2G6"/>
<dbReference type="OMA" id="CTEYSPG"/>
<dbReference type="OrthoDB" id="10038672at2759"/>
<dbReference type="PAN-GO" id="Q8N2G6">
    <property type="GO annotations" value="0 GO annotations based on evolutionary models"/>
</dbReference>
<dbReference type="PhylomeDB" id="Q8N2G6"/>
<dbReference type="TreeFam" id="TF319664"/>
<dbReference type="PathwayCommons" id="Q8N2G6"/>
<dbReference type="BioGRID-ORCS" id="219654">
    <property type="hits" value="12 hits in 1157 CRISPR screens"/>
</dbReference>
<dbReference type="ChiTaRS" id="ZCCHC24">
    <property type="organism name" value="human"/>
</dbReference>
<dbReference type="GenomeRNAi" id="219654"/>
<dbReference type="Pharos" id="Q8N2G6">
    <property type="development level" value="Tdark"/>
</dbReference>
<dbReference type="PRO" id="PR:Q8N2G6"/>
<dbReference type="Proteomes" id="UP000005640">
    <property type="component" value="Chromosome 10"/>
</dbReference>
<dbReference type="RNAct" id="Q8N2G6">
    <property type="molecule type" value="protein"/>
</dbReference>
<dbReference type="Bgee" id="ENSG00000165424">
    <property type="expression patterns" value="Expressed in inferior vagus X ganglion and 202 other cell types or tissues"/>
</dbReference>
<dbReference type="ExpressionAtlas" id="Q8N2G6">
    <property type="expression patterns" value="baseline and differential"/>
</dbReference>
<dbReference type="GO" id="GO:0003723">
    <property type="term" value="F:RNA binding"/>
    <property type="evidence" value="ECO:0007005"/>
    <property type="project" value="UniProtKB"/>
</dbReference>
<dbReference type="GO" id="GO:0008270">
    <property type="term" value="F:zinc ion binding"/>
    <property type="evidence" value="ECO:0007669"/>
    <property type="project" value="UniProtKB-KW"/>
</dbReference>
<dbReference type="InterPro" id="IPR027377">
    <property type="entry name" value="ZAR1/RTP1-5-like_Znf-3CxxC"/>
</dbReference>
<dbReference type="InterPro" id="IPR033446">
    <property type="entry name" value="Zcchc24_Znf-3CxxC"/>
</dbReference>
<dbReference type="InterPro" id="IPR025829">
    <property type="entry name" value="Zn_knuckle_CX2CX3GHX4C"/>
</dbReference>
<dbReference type="InterPro" id="IPR001878">
    <property type="entry name" value="Znf_CCHC"/>
</dbReference>
<dbReference type="InterPro" id="IPR036875">
    <property type="entry name" value="Znf_CCHC_sf"/>
</dbReference>
<dbReference type="Pfam" id="PF23490">
    <property type="entry name" value="ZCCHC24_C"/>
    <property type="match status" value="1"/>
</dbReference>
<dbReference type="Pfam" id="PF13696">
    <property type="entry name" value="zf-CCHC_2"/>
    <property type="match status" value="1"/>
</dbReference>
<dbReference type="Pfam" id="PF17180">
    <property type="entry name" value="Zn_ribbon_3CxxC_2"/>
    <property type="match status" value="1"/>
</dbReference>
<dbReference type="SMART" id="SM01328">
    <property type="entry name" value="zf-3CxxC"/>
    <property type="match status" value="1"/>
</dbReference>
<dbReference type="SUPFAM" id="SSF57756">
    <property type="entry name" value="Retrovirus zinc finger-like domains"/>
    <property type="match status" value="1"/>
</dbReference>
<dbReference type="PROSITE" id="PS50158">
    <property type="entry name" value="ZF_CCHC"/>
    <property type="match status" value="1"/>
</dbReference>
<reference key="1">
    <citation type="journal article" date="2004" name="Nat. Genet.">
        <title>Complete sequencing and characterization of 21,243 full-length human cDNAs.</title>
        <authorList>
            <person name="Ota T."/>
            <person name="Suzuki Y."/>
            <person name="Nishikawa T."/>
            <person name="Otsuki T."/>
            <person name="Sugiyama T."/>
            <person name="Irie R."/>
            <person name="Wakamatsu A."/>
            <person name="Hayashi K."/>
            <person name="Sato H."/>
            <person name="Nagai K."/>
            <person name="Kimura K."/>
            <person name="Makita H."/>
            <person name="Sekine M."/>
            <person name="Obayashi M."/>
            <person name="Nishi T."/>
            <person name="Shibahara T."/>
            <person name="Tanaka T."/>
            <person name="Ishii S."/>
            <person name="Yamamoto J."/>
            <person name="Saito K."/>
            <person name="Kawai Y."/>
            <person name="Isono Y."/>
            <person name="Nakamura Y."/>
            <person name="Nagahari K."/>
            <person name="Murakami K."/>
            <person name="Yasuda T."/>
            <person name="Iwayanagi T."/>
            <person name="Wagatsuma M."/>
            <person name="Shiratori A."/>
            <person name="Sudo H."/>
            <person name="Hosoiri T."/>
            <person name="Kaku Y."/>
            <person name="Kodaira H."/>
            <person name="Kondo H."/>
            <person name="Sugawara M."/>
            <person name="Takahashi M."/>
            <person name="Kanda K."/>
            <person name="Yokoi T."/>
            <person name="Furuya T."/>
            <person name="Kikkawa E."/>
            <person name="Omura Y."/>
            <person name="Abe K."/>
            <person name="Kamihara K."/>
            <person name="Katsuta N."/>
            <person name="Sato K."/>
            <person name="Tanikawa M."/>
            <person name="Yamazaki M."/>
            <person name="Ninomiya K."/>
            <person name="Ishibashi T."/>
            <person name="Yamashita H."/>
            <person name="Murakawa K."/>
            <person name="Fujimori K."/>
            <person name="Tanai H."/>
            <person name="Kimata M."/>
            <person name="Watanabe M."/>
            <person name="Hiraoka S."/>
            <person name="Chiba Y."/>
            <person name="Ishida S."/>
            <person name="Ono Y."/>
            <person name="Takiguchi S."/>
            <person name="Watanabe S."/>
            <person name="Yosida M."/>
            <person name="Hotuta T."/>
            <person name="Kusano J."/>
            <person name="Kanehori K."/>
            <person name="Takahashi-Fujii A."/>
            <person name="Hara H."/>
            <person name="Tanase T.-O."/>
            <person name="Nomura Y."/>
            <person name="Togiya S."/>
            <person name="Komai F."/>
            <person name="Hara R."/>
            <person name="Takeuchi K."/>
            <person name="Arita M."/>
            <person name="Imose N."/>
            <person name="Musashino K."/>
            <person name="Yuuki H."/>
            <person name="Oshima A."/>
            <person name="Sasaki N."/>
            <person name="Aotsuka S."/>
            <person name="Yoshikawa Y."/>
            <person name="Matsunawa H."/>
            <person name="Ichihara T."/>
            <person name="Shiohata N."/>
            <person name="Sano S."/>
            <person name="Moriya S."/>
            <person name="Momiyama H."/>
            <person name="Satoh N."/>
            <person name="Takami S."/>
            <person name="Terashima Y."/>
            <person name="Suzuki O."/>
            <person name="Nakagawa S."/>
            <person name="Senoh A."/>
            <person name="Mizoguchi H."/>
            <person name="Goto Y."/>
            <person name="Shimizu F."/>
            <person name="Wakebe H."/>
            <person name="Hishigaki H."/>
            <person name="Watanabe T."/>
            <person name="Sugiyama A."/>
            <person name="Takemoto M."/>
            <person name="Kawakami B."/>
            <person name="Yamazaki M."/>
            <person name="Watanabe K."/>
            <person name="Kumagai A."/>
            <person name="Itakura S."/>
            <person name="Fukuzumi Y."/>
            <person name="Fujimori Y."/>
            <person name="Komiyama M."/>
            <person name="Tashiro H."/>
            <person name="Tanigami A."/>
            <person name="Fujiwara T."/>
            <person name="Ono T."/>
            <person name="Yamada K."/>
            <person name="Fujii Y."/>
            <person name="Ozaki K."/>
            <person name="Hirao M."/>
            <person name="Ohmori Y."/>
            <person name="Kawabata A."/>
            <person name="Hikiji T."/>
            <person name="Kobatake N."/>
            <person name="Inagaki H."/>
            <person name="Ikema Y."/>
            <person name="Okamoto S."/>
            <person name="Okitani R."/>
            <person name="Kawakami T."/>
            <person name="Noguchi S."/>
            <person name="Itoh T."/>
            <person name="Shigeta K."/>
            <person name="Senba T."/>
            <person name="Matsumura K."/>
            <person name="Nakajima Y."/>
            <person name="Mizuno T."/>
            <person name="Morinaga M."/>
            <person name="Sasaki M."/>
            <person name="Togashi T."/>
            <person name="Oyama M."/>
            <person name="Hata H."/>
            <person name="Watanabe M."/>
            <person name="Komatsu T."/>
            <person name="Mizushima-Sugano J."/>
            <person name="Satoh T."/>
            <person name="Shirai Y."/>
            <person name="Takahashi Y."/>
            <person name="Nakagawa K."/>
            <person name="Okumura K."/>
            <person name="Nagase T."/>
            <person name="Nomura N."/>
            <person name="Kikuchi H."/>
            <person name="Masuho Y."/>
            <person name="Yamashita R."/>
            <person name="Nakai K."/>
            <person name="Yada T."/>
            <person name="Nakamura Y."/>
            <person name="Ohara O."/>
            <person name="Isogai T."/>
            <person name="Sugano S."/>
        </authorList>
    </citation>
    <scope>NUCLEOTIDE SEQUENCE [LARGE SCALE MRNA]</scope>
    <source>
        <tissue>Thyroid</tissue>
    </source>
</reference>
<reference key="2">
    <citation type="journal article" date="2004" name="Nature">
        <title>The DNA sequence and comparative analysis of human chromosome 10.</title>
        <authorList>
            <person name="Deloukas P."/>
            <person name="Earthrowl M.E."/>
            <person name="Grafham D.V."/>
            <person name="Rubenfield M."/>
            <person name="French L."/>
            <person name="Steward C.A."/>
            <person name="Sims S.K."/>
            <person name="Jones M.C."/>
            <person name="Searle S."/>
            <person name="Scott C."/>
            <person name="Howe K."/>
            <person name="Hunt S.E."/>
            <person name="Andrews T.D."/>
            <person name="Gilbert J.G.R."/>
            <person name="Swarbreck D."/>
            <person name="Ashurst J.L."/>
            <person name="Taylor A."/>
            <person name="Battles J."/>
            <person name="Bird C.P."/>
            <person name="Ainscough R."/>
            <person name="Almeida J.P."/>
            <person name="Ashwell R.I.S."/>
            <person name="Ambrose K.D."/>
            <person name="Babbage A.K."/>
            <person name="Bagguley C.L."/>
            <person name="Bailey J."/>
            <person name="Banerjee R."/>
            <person name="Bates K."/>
            <person name="Beasley H."/>
            <person name="Bray-Allen S."/>
            <person name="Brown A.J."/>
            <person name="Brown J.Y."/>
            <person name="Burford D.C."/>
            <person name="Burrill W."/>
            <person name="Burton J."/>
            <person name="Cahill P."/>
            <person name="Camire D."/>
            <person name="Carter N.P."/>
            <person name="Chapman J.C."/>
            <person name="Clark S.Y."/>
            <person name="Clarke G."/>
            <person name="Clee C.M."/>
            <person name="Clegg S."/>
            <person name="Corby N."/>
            <person name="Coulson A."/>
            <person name="Dhami P."/>
            <person name="Dutta I."/>
            <person name="Dunn M."/>
            <person name="Faulkner L."/>
            <person name="Frankish A."/>
            <person name="Frankland J.A."/>
            <person name="Garner P."/>
            <person name="Garnett J."/>
            <person name="Gribble S."/>
            <person name="Griffiths C."/>
            <person name="Grocock R."/>
            <person name="Gustafson E."/>
            <person name="Hammond S."/>
            <person name="Harley J.L."/>
            <person name="Hart E."/>
            <person name="Heath P.D."/>
            <person name="Ho T.P."/>
            <person name="Hopkins B."/>
            <person name="Horne J."/>
            <person name="Howden P.J."/>
            <person name="Huckle E."/>
            <person name="Hynds C."/>
            <person name="Johnson C."/>
            <person name="Johnson D."/>
            <person name="Kana A."/>
            <person name="Kay M."/>
            <person name="Kimberley A.M."/>
            <person name="Kershaw J.K."/>
            <person name="Kokkinaki M."/>
            <person name="Laird G.K."/>
            <person name="Lawlor S."/>
            <person name="Lee H.M."/>
            <person name="Leongamornlert D.A."/>
            <person name="Laird G."/>
            <person name="Lloyd C."/>
            <person name="Lloyd D.M."/>
            <person name="Loveland J."/>
            <person name="Lovell J."/>
            <person name="McLaren S."/>
            <person name="McLay K.E."/>
            <person name="McMurray A."/>
            <person name="Mashreghi-Mohammadi M."/>
            <person name="Matthews L."/>
            <person name="Milne S."/>
            <person name="Nickerson T."/>
            <person name="Nguyen M."/>
            <person name="Overton-Larty E."/>
            <person name="Palmer S.A."/>
            <person name="Pearce A.V."/>
            <person name="Peck A.I."/>
            <person name="Pelan S."/>
            <person name="Phillimore B."/>
            <person name="Porter K."/>
            <person name="Rice C.M."/>
            <person name="Rogosin A."/>
            <person name="Ross M.T."/>
            <person name="Sarafidou T."/>
            <person name="Sehra H.K."/>
            <person name="Shownkeen R."/>
            <person name="Skuce C.D."/>
            <person name="Smith M."/>
            <person name="Standring L."/>
            <person name="Sycamore N."/>
            <person name="Tester J."/>
            <person name="Thorpe A."/>
            <person name="Torcasso W."/>
            <person name="Tracey A."/>
            <person name="Tromans A."/>
            <person name="Tsolas J."/>
            <person name="Wall M."/>
            <person name="Walsh J."/>
            <person name="Wang H."/>
            <person name="Weinstock K."/>
            <person name="West A.P."/>
            <person name="Willey D.L."/>
            <person name="Whitehead S.L."/>
            <person name="Wilming L."/>
            <person name="Wray P.W."/>
            <person name="Young L."/>
            <person name="Chen Y."/>
            <person name="Lovering R.C."/>
            <person name="Moschonas N.K."/>
            <person name="Siebert R."/>
            <person name="Fechtel K."/>
            <person name="Bentley D."/>
            <person name="Durbin R.M."/>
            <person name="Hubbard T."/>
            <person name="Doucette-Stamm L."/>
            <person name="Beck S."/>
            <person name="Smith D.R."/>
            <person name="Rogers J."/>
        </authorList>
    </citation>
    <scope>NUCLEOTIDE SEQUENCE [LARGE SCALE GENOMIC DNA]</scope>
</reference>
<reference key="3">
    <citation type="journal article" date="2004" name="Genome Res.">
        <title>The status, quality, and expansion of the NIH full-length cDNA project: the Mammalian Gene Collection (MGC).</title>
        <authorList>
            <consortium name="The MGC Project Team"/>
        </authorList>
    </citation>
    <scope>NUCLEOTIDE SEQUENCE [LARGE SCALE MRNA]</scope>
    <scope>VARIANT VAL-43</scope>
    <source>
        <tissue>Brain</tissue>
        <tissue>PNS</tissue>
    </source>
</reference>
<reference key="4">
    <citation type="journal article" date="2006" name="Cell">
        <title>Global, in vivo, and site-specific phosphorylation dynamics in signaling networks.</title>
        <authorList>
            <person name="Olsen J.V."/>
            <person name="Blagoev B."/>
            <person name="Gnad F."/>
            <person name="Macek B."/>
            <person name="Kumar C."/>
            <person name="Mortensen P."/>
            <person name="Mann M."/>
        </authorList>
    </citation>
    <scope>PHOSPHORYLATION [LARGE SCALE ANALYSIS] AT SER-65</scope>
    <scope>IDENTIFICATION BY MASS SPECTROMETRY [LARGE SCALE ANALYSIS]</scope>
    <source>
        <tissue>Cervix carcinoma</tissue>
    </source>
</reference>
<reference key="5">
    <citation type="journal article" date="2008" name="Proc. Natl. Acad. Sci. U.S.A.">
        <title>A quantitative atlas of mitotic phosphorylation.</title>
        <authorList>
            <person name="Dephoure N."/>
            <person name="Zhou C."/>
            <person name="Villen J."/>
            <person name="Beausoleil S.A."/>
            <person name="Bakalarski C.E."/>
            <person name="Elledge S.J."/>
            <person name="Gygi S.P."/>
        </authorList>
    </citation>
    <scope>PHOSPHORYLATION [LARGE SCALE ANALYSIS] AT SER-65</scope>
    <scope>IDENTIFICATION BY MASS SPECTROMETRY [LARGE SCALE ANALYSIS]</scope>
    <source>
        <tissue>Cervix carcinoma</tissue>
    </source>
</reference>
<reference key="6">
    <citation type="journal article" date="2009" name="Sci. Signal.">
        <title>Quantitative phosphoproteomic analysis of T cell receptor signaling reveals system-wide modulation of protein-protein interactions.</title>
        <authorList>
            <person name="Mayya V."/>
            <person name="Lundgren D.H."/>
            <person name="Hwang S.-I."/>
            <person name="Rezaul K."/>
            <person name="Wu L."/>
            <person name="Eng J.K."/>
            <person name="Rodionov V."/>
            <person name="Han D.K."/>
        </authorList>
    </citation>
    <scope>PHOSPHORYLATION [LARGE SCALE ANALYSIS] AT SER-93</scope>
    <scope>IDENTIFICATION BY MASS SPECTROMETRY [LARGE SCALE ANALYSIS]</scope>
    <source>
        <tissue>Leukemic T-cell</tissue>
    </source>
</reference>
<feature type="chain" id="PRO_0000274289" description="Zinc finger CCHC domain-containing protein 24">
    <location>
        <begin position="1"/>
        <end position="241"/>
    </location>
</feature>
<feature type="zinc finger region" description="CCHC-type" evidence="1">
    <location>
        <begin position="132"/>
        <end position="149"/>
    </location>
</feature>
<feature type="modified residue" description="Phosphoserine" evidence="4 5">
    <location>
        <position position="65"/>
    </location>
</feature>
<feature type="modified residue" description="Phosphoserine" evidence="6">
    <location>
        <position position="93"/>
    </location>
</feature>
<feature type="sequence variant" id="VAR_030249" description="In dbSNP:rs17852581." evidence="2">
    <original>E</original>
    <variation>V</variation>
    <location>
        <position position="43"/>
    </location>
</feature>
<feature type="sequence conflict" description="In Ref. 3; AAH39249." evidence="3" ref="3">
    <original>A</original>
    <variation>T</variation>
    <location>
        <position position="48"/>
    </location>
</feature>
<feature type="sequence conflict" description="In Ref. 3; AAH39249." evidence="3" ref="3">
    <original>P</original>
    <variation>T</variation>
    <location>
        <position position="152"/>
    </location>
</feature>
<keyword id="KW-0479">Metal-binding</keyword>
<keyword id="KW-0597">Phosphoprotein</keyword>
<keyword id="KW-1267">Proteomics identification</keyword>
<keyword id="KW-1185">Reference proteome</keyword>
<keyword id="KW-0862">Zinc</keyword>
<keyword id="KW-0863">Zinc-finger</keyword>
<accession>Q8N2G6</accession>
<accession>Q5U5T9</accession>
<accession>Q8TAG0</accession>
<gene>
    <name type="primary">ZCCHC24</name>
    <name type="synonym">C10orf56</name>
</gene>
<comment type="sequence caution" evidence="3">
    <conflict type="frameshift">
        <sequence resource="EMBL-CDS" id="AAH39249"/>
    </conflict>
</comment>
<protein>
    <recommendedName>
        <fullName>Zinc finger CCHC domain-containing protein 24</fullName>
    </recommendedName>
</protein>
<proteinExistence type="evidence at protein level"/>
<evidence type="ECO:0000255" key="1">
    <source>
        <dbReference type="PROSITE-ProRule" id="PRU00047"/>
    </source>
</evidence>
<evidence type="ECO:0000269" key="2">
    <source>
    </source>
</evidence>
<evidence type="ECO:0000305" key="3"/>
<evidence type="ECO:0007744" key="4">
    <source>
    </source>
</evidence>
<evidence type="ECO:0007744" key="5">
    <source>
    </source>
</evidence>
<evidence type="ECO:0007744" key="6">
    <source>
    </source>
</evidence>